<dbReference type="EMBL" id="AB047810">
    <property type="protein sequence ID" value="BAB32887.1"/>
    <property type="molecule type" value="mRNA"/>
</dbReference>
<dbReference type="EMBL" id="AB018109">
    <property type="protein sequence ID" value="BAB08680.1"/>
    <property type="molecule type" value="Genomic_DNA"/>
</dbReference>
<dbReference type="EMBL" id="CP002688">
    <property type="protein sequence ID" value="AED96110.1"/>
    <property type="molecule type" value="Genomic_DNA"/>
</dbReference>
<dbReference type="EMBL" id="AY080801">
    <property type="protein sequence ID" value="AAL87282.1"/>
    <property type="molecule type" value="mRNA"/>
</dbReference>
<dbReference type="EMBL" id="AY133873">
    <property type="protein sequence ID" value="AAM91807.1"/>
    <property type="molecule type" value="mRNA"/>
</dbReference>
<dbReference type="RefSeq" id="NP_199977.1">
    <property type="nucleotide sequence ID" value="NM_124543.3"/>
</dbReference>
<dbReference type="SMR" id="Q9FHM0"/>
<dbReference type="FunCoup" id="Q9FHM0">
    <property type="interactions" value="152"/>
</dbReference>
<dbReference type="STRING" id="3702.Q9FHM0"/>
<dbReference type="PaxDb" id="3702-AT5G51640.1"/>
<dbReference type="ProteomicsDB" id="232988"/>
<dbReference type="EnsemblPlants" id="AT5G51640.1">
    <property type="protein sequence ID" value="AT5G51640.1"/>
    <property type="gene ID" value="AT5G51640"/>
</dbReference>
<dbReference type="GeneID" id="835238"/>
<dbReference type="Gramene" id="AT5G51640.1">
    <property type="protein sequence ID" value="AT5G51640.1"/>
    <property type="gene ID" value="AT5G51640"/>
</dbReference>
<dbReference type="KEGG" id="ath:AT5G51640"/>
<dbReference type="Araport" id="AT5G51640"/>
<dbReference type="TAIR" id="AT5G51640">
    <property type="gene designation" value="YLS7"/>
</dbReference>
<dbReference type="eggNOG" id="ENOG502QTC6">
    <property type="taxonomic scope" value="Eukaryota"/>
</dbReference>
<dbReference type="HOGENOM" id="CLU_020953_6_3_1"/>
<dbReference type="InParanoid" id="Q9FHM0"/>
<dbReference type="OMA" id="FNEPFGF"/>
<dbReference type="PhylomeDB" id="Q9FHM0"/>
<dbReference type="PRO" id="PR:Q9FHM0"/>
<dbReference type="Proteomes" id="UP000006548">
    <property type="component" value="Chromosome 5"/>
</dbReference>
<dbReference type="ExpressionAtlas" id="Q9FHM0">
    <property type="expression patterns" value="baseline and differential"/>
</dbReference>
<dbReference type="GO" id="GO:0000138">
    <property type="term" value="C:Golgi trans cisterna"/>
    <property type="evidence" value="ECO:0007005"/>
    <property type="project" value="TAIR"/>
</dbReference>
<dbReference type="GO" id="GO:0016020">
    <property type="term" value="C:membrane"/>
    <property type="evidence" value="ECO:0007669"/>
    <property type="project" value="UniProtKB-SubCell"/>
</dbReference>
<dbReference type="GO" id="GO:0016413">
    <property type="term" value="F:O-acetyltransferase activity"/>
    <property type="evidence" value="ECO:0007669"/>
    <property type="project" value="InterPro"/>
</dbReference>
<dbReference type="GO" id="GO:0010150">
    <property type="term" value="P:leaf senescence"/>
    <property type="evidence" value="ECO:0000270"/>
    <property type="project" value="TAIR"/>
</dbReference>
<dbReference type="InterPro" id="IPR029962">
    <property type="entry name" value="TBL"/>
</dbReference>
<dbReference type="InterPro" id="IPR026057">
    <property type="entry name" value="TBL_C"/>
</dbReference>
<dbReference type="InterPro" id="IPR025846">
    <property type="entry name" value="TBL_N"/>
</dbReference>
<dbReference type="PANTHER" id="PTHR32285">
    <property type="entry name" value="PROTEIN TRICHOME BIREFRINGENCE-LIKE 9-RELATED"/>
    <property type="match status" value="1"/>
</dbReference>
<dbReference type="PANTHER" id="PTHR32285:SF338">
    <property type="entry name" value="PROTEIN YLS7"/>
    <property type="match status" value="1"/>
</dbReference>
<dbReference type="Pfam" id="PF13839">
    <property type="entry name" value="PC-Esterase"/>
    <property type="match status" value="1"/>
</dbReference>
<dbReference type="Pfam" id="PF14416">
    <property type="entry name" value="PMR5N"/>
    <property type="match status" value="1"/>
</dbReference>
<keyword id="KW-0472">Membrane</keyword>
<keyword id="KW-1185">Reference proteome</keyword>
<keyword id="KW-0735">Signal-anchor</keyword>
<keyword id="KW-0812">Transmembrane</keyword>
<keyword id="KW-1133">Transmembrane helix</keyword>
<feature type="chain" id="PRO_0000424704" description="Protein YLS7">
    <location>
        <begin position="1"/>
        <end position="501"/>
    </location>
</feature>
<feature type="transmembrane region" description="Helical; Signal-anchor for type II membrane protein" evidence="3">
    <location>
        <begin position="25"/>
        <end position="45"/>
    </location>
</feature>
<feature type="region of interest" description="Disordered" evidence="4">
    <location>
        <begin position="69"/>
        <end position="131"/>
    </location>
</feature>
<feature type="region of interest" description="Disordered" evidence="4">
    <location>
        <begin position="438"/>
        <end position="467"/>
    </location>
</feature>
<feature type="short sequence motif" description="GDS motif">
    <location>
        <begin position="211"/>
        <end position="213"/>
    </location>
</feature>
<feature type="short sequence motif" description="DCXHWCLPGXXDXWN motif">
    <location>
        <begin position="467"/>
        <end position="481"/>
    </location>
</feature>
<feature type="compositionally biased region" description="Low complexity" evidence="4">
    <location>
        <begin position="78"/>
        <end position="89"/>
    </location>
</feature>
<feature type="compositionally biased region" description="Basic and acidic residues" evidence="4">
    <location>
        <begin position="94"/>
        <end position="113"/>
    </location>
</feature>
<feature type="compositionally biased region" description="Polar residues" evidence="4">
    <location>
        <begin position="114"/>
        <end position="124"/>
    </location>
</feature>
<feature type="compositionally biased region" description="Basic and acidic residues" evidence="4">
    <location>
        <begin position="449"/>
        <end position="459"/>
    </location>
</feature>
<name>TBL17_ARATH</name>
<protein>
    <recommendedName>
        <fullName>Protein YLS7</fullName>
    </recommendedName>
    <alternativeName>
        <fullName>Protein TRICHOME BIREFRINGENCE-LIKE 17</fullName>
    </alternativeName>
    <alternativeName>
        <fullName>Protein YELLOW-LEAF-SPECIFIC GENE 7</fullName>
    </alternativeName>
</protein>
<evidence type="ECO:0000250" key="1">
    <source>
        <dbReference type="UniProtKB" id="Q9FG35"/>
    </source>
</evidence>
<evidence type="ECO:0000250" key="2">
    <source>
        <dbReference type="UniProtKB" id="Q9LY46"/>
    </source>
</evidence>
<evidence type="ECO:0000255" key="3"/>
<evidence type="ECO:0000256" key="4">
    <source>
        <dbReference type="SAM" id="MobiDB-lite"/>
    </source>
</evidence>
<evidence type="ECO:0000269" key="5">
    <source>
    </source>
</evidence>
<evidence type="ECO:0000305" key="6"/>
<evidence type="ECO:0000305" key="7">
    <source>
    </source>
</evidence>
<organism>
    <name type="scientific">Arabidopsis thaliana</name>
    <name type="common">Mouse-ear cress</name>
    <dbReference type="NCBI Taxonomy" id="3702"/>
    <lineage>
        <taxon>Eukaryota</taxon>
        <taxon>Viridiplantae</taxon>
        <taxon>Streptophyta</taxon>
        <taxon>Embryophyta</taxon>
        <taxon>Tracheophyta</taxon>
        <taxon>Spermatophyta</taxon>
        <taxon>Magnoliopsida</taxon>
        <taxon>eudicotyledons</taxon>
        <taxon>Gunneridae</taxon>
        <taxon>Pentapetalae</taxon>
        <taxon>rosids</taxon>
        <taxon>malvids</taxon>
        <taxon>Brassicales</taxon>
        <taxon>Brassicaceae</taxon>
        <taxon>Camelineae</taxon>
        <taxon>Arabidopsis</taxon>
    </lineage>
</organism>
<gene>
    <name type="primary">YLS7</name>
    <name type="synonym">TBL17</name>
    <name type="ordered locus">At5g51640</name>
    <name type="ORF">K17N15.19</name>
</gene>
<comment type="function">
    <text evidence="1 2">May act as a bridging protein that binds pectin and other cell wall polysaccharides. Probably involved in maintaining esterification of pectins (By similarity). May be involved in the specific O-acetylation of cell wall polymers (By similarity).</text>
</comment>
<comment type="subcellular location">
    <subcellularLocation>
        <location evidence="6">Membrane</location>
        <topology evidence="6">Single-pass type II membrane protein</topology>
    </subcellularLocation>
</comment>
<comment type="tissue specificity">
    <text evidence="5">Expressed in roots, cauline leaves and flowers.</text>
</comment>
<comment type="developmental stage">
    <text evidence="5">Up-regulated in leaves during natural senescence.</text>
</comment>
<comment type="induction">
    <text evidence="5">By dark.</text>
</comment>
<comment type="miscellaneous">
    <text evidence="7">Contains 2 motifs that are conserved in esterases, but it is unlikely that this protein belongs to the catalytically active pectin esterases.</text>
</comment>
<comment type="similarity">
    <text evidence="6">Belongs to the PC-esterase family. TBL subfamily.</text>
</comment>
<reference key="1">
    <citation type="journal article" date="2001" name="Plant Cell Physiol.">
        <title>Isolation and RNA gel blot analysis of genes that could serve as potential molecular markers for leaf senescence in Arabidopsis thaliana.</title>
        <authorList>
            <person name="Yoshida S."/>
            <person name="Ito M."/>
            <person name="Nishida I."/>
            <person name="Watanabe A."/>
        </authorList>
    </citation>
    <scope>NUCLEOTIDE SEQUENCE [MRNA]</scope>
    <scope>TISSUE SPECIFICITY</scope>
    <scope>DEVELOPMENTAL STAGE</scope>
    <scope>INDUCTION</scope>
</reference>
<reference key="2">
    <citation type="journal article" date="2000" name="DNA Res.">
        <title>Structural analysis of Arabidopsis thaliana chromosome 5. X. Sequence features of the regions of 3,076,755 bp covered by sixty P1 and TAC clones.</title>
        <authorList>
            <person name="Sato S."/>
            <person name="Nakamura Y."/>
            <person name="Kaneko T."/>
            <person name="Katoh T."/>
            <person name="Asamizu E."/>
            <person name="Kotani H."/>
            <person name="Tabata S."/>
        </authorList>
    </citation>
    <scope>NUCLEOTIDE SEQUENCE [LARGE SCALE GENOMIC DNA]</scope>
    <source>
        <strain>cv. Columbia</strain>
    </source>
</reference>
<reference key="3">
    <citation type="journal article" date="2017" name="Plant J.">
        <title>Araport11: a complete reannotation of the Arabidopsis thaliana reference genome.</title>
        <authorList>
            <person name="Cheng C.Y."/>
            <person name="Krishnakumar V."/>
            <person name="Chan A.P."/>
            <person name="Thibaud-Nissen F."/>
            <person name="Schobel S."/>
            <person name="Town C.D."/>
        </authorList>
    </citation>
    <scope>GENOME REANNOTATION</scope>
    <source>
        <strain>cv. Columbia</strain>
    </source>
</reference>
<reference key="4">
    <citation type="journal article" date="2003" name="Science">
        <title>Empirical analysis of transcriptional activity in the Arabidopsis genome.</title>
        <authorList>
            <person name="Yamada K."/>
            <person name="Lim J."/>
            <person name="Dale J.M."/>
            <person name="Chen H."/>
            <person name="Shinn P."/>
            <person name="Palm C.J."/>
            <person name="Southwick A.M."/>
            <person name="Wu H.C."/>
            <person name="Kim C.J."/>
            <person name="Nguyen M."/>
            <person name="Pham P.K."/>
            <person name="Cheuk R.F."/>
            <person name="Karlin-Newmann G."/>
            <person name="Liu S.X."/>
            <person name="Lam B."/>
            <person name="Sakano H."/>
            <person name="Wu T."/>
            <person name="Yu G."/>
            <person name="Miranda M."/>
            <person name="Quach H.L."/>
            <person name="Tripp M."/>
            <person name="Chang C.H."/>
            <person name="Lee J.M."/>
            <person name="Toriumi M.J."/>
            <person name="Chan M.M."/>
            <person name="Tang C.C."/>
            <person name="Onodera C.S."/>
            <person name="Deng J.M."/>
            <person name="Akiyama K."/>
            <person name="Ansari Y."/>
            <person name="Arakawa T."/>
            <person name="Banh J."/>
            <person name="Banno F."/>
            <person name="Bowser L."/>
            <person name="Brooks S.Y."/>
            <person name="Carninci P."/>
            <person name="Chao Q."/>
            <person name="Choy N."/>
            <person name="Enju A."/>
            <person name="Goldsmith A.D."/>
            <person name="Gurjal M."/>
            <person name="Hansen N.F."/>
            <person name="Hayashizaki Y."/>
            <person name="Johnson-Hopson C."/>
            <person name="Hsuan V.W."/>
            <person name="Iida K."/>
            <person name="Karnes M."/>
            <person name="Khan S."/>
            <person name="Koesema E."/>
            <person name="Ishida J."/>
            <person name="Jiang P.X."/>
            <person name="Jones T."/>
            <person name="Kawai J."/>
            <person name="Kamiya A."/>
            <person name="Meyers C."/>
            <person name="Nakajima M."/>
            <person name="Narusaka M."/>
            <person name="Seki M."/>
            <person name="Sakurai T."/>
            <person name="Satou M."/>
            <person name="Tamse R."/>
            <person name="Vaysberg M."/>
            <person name="Wallender E.K."/>
            <person name="Wong C."/>
            <person name="Yamamura Y."/>
            <person name="Yuan S."/>
            <person name="Shinozaki K."/>
            <person name="Davis R.W."/>
            <person name="Theologis A."/>
            <person name="Ecker J.R."/>
        </authorList>
    </citation>
    <scope>NUCLEOTIDE SEQUENCE [LARGE SCALE MRNA]</scope>
    <source>
        <strain>cv. Columbia</strain>
    </source>
</reference>
<reference key="5">
    <citation type="journal article" date="2007" name="Plant J.">
        <title>Arabidopsis ESK1 encodes a novel regulator of freezing tolerance.</title>
        <authorList>
            <person name="Xin Z."/>
            <person name="Mandaokar A."/>
            <person name="Chen J."/>
            <person name="Last R.L."/>
            <person name="Browse J."/>
        </authorList>
    </citation>
    <scope>GENE FAMILY</scope>
    <source>
        <strain>cv. Columbia</strain>
    </source>
</reference>
<reference key="6">
    <citation type="journal article" date="2010" name="Plant Physiol.">
        <title>TRICHOME BIREFRINGENCE and its homolog AT5G01360 encode plant-specific DUF231 proteins required for cellulose biosynthesis in Arabidopsis.</title>
        <authorList>
            <person name="Bischoff V."/>
            <person name="Nita S."/>
            <person name="Neumetzler L."/>
            <person name="Schindelasch D."/>
            <person name="Urbain A."/>
            <person name="Eshed R."/>
            <person name="Persson S."/>
            <person name="Delmer D."/>
            <person name="Scheible W.R."/>
        </authorList>
    </citation>
    <scope>GENE FAMILY</scope>
    <scope>NOMENCLATURE</scope>
</reference>
<reference key="7">
    <citation type="journal article" date="2010" name="Plant Signal. Behav.">
        <title>Involvement of TBL/DUF231 proteins into cell wall biology.</title>
        <authorList>
            <person name="Bischoff V."/>
            <person name="Selbig J."/>
            <person name="Scheible W.R."/>
        </authorList>
    </citation>
    <scope>3D-STRUCTURE MODELING</scope>
</reference>
<accession>Q9FHM0</accession>
<proteinExistence type="evidence at transcript level"/>
<sequence>MTLASPRVSNSKTTVLLFPRKVSSIAFAIGGLTSFVIFASLLLFTYPIGSSVTDYFYRTETTQNVQFHHSIHDPDRNPSPVSSSESPPVLTQDSDDKVLPKGSHDSNDVRLGEETNSGKSSNVSIDEEATQDHVETECDLYHGNWFYDPMGPLYTNNSCPLLTQMQNCQGNGRPDKGYENWRWKPSQCDLPRFDAKKFLELMRGKTLAFIGDSVARNQMESMMCLLWQVETPVNRGNRKMQRWYFRSSSVMIARMWSSWLVHQFNEPFGFATDGVTKLKLDQPDERIIEALPNFDVVVLSSGHWFAKQSVYILNDQIVGGQLWWPDKSKPEKINNVEAFGISVETIIKAMAKHPNYTGLTILRTWSPDHYEGGAWNTGGSCTGKVEPLPPGNLVTNGFTEIMHEKQATGFHRAVADDKLGNRSKKLKLMDITEAFGYRHDGHPGPYRSPDPKKITKRGPDGQPPPQDCLHWCMPGPVDTWNEMVLEIIRRDFEGRQSSPSS</sequence>